<sequence>MARIAGVNIPTAKRVPIALTYIHGIGDFVAGQICDAVGIDRARRVNELSDAEVLSIREYIDANVTVEGDLRRETSMNIKRLMDLGCYRGLRHRRGLPVRGQRTHTNARTRKGPAKAIAGKKK</sequence>
<proteinExistence type="inferred from homology"/>
<comment type="function">
    <text evidence="1">Located at the top of the head of the 30S subunit, it contacts several helices of the 16S rRNA. In the 70S ribosome it contacts the 23S rRNA (bridge B1a) and protein L5 of the 50S subunit (bridge B1b), connecting the 2 subunits; these bridges are implicated in subunit movement. Contacts the tRNAs in the A and P-sites.</text>
</comment>
<comment type="subunit">
    <text evidence="1">Part of the 30S ribosomal subunit. Forms a loose heterodimer with protein S19. Forms two bridges to the 50S subunit in the 70S ribosome.</text>
</comment>
<comment type="similarity">
    <text evidence="1">Belongs to the universal ribosomal protein uS13 family.</text>
</comment>
<reference key="1">
    <citation type="submission" date="2007-02" db="EMBL/GenBank/DDBJ databases">
        <title>Complete sequence of chromosome 1 of Rhodobacter sphaeroides ATCC 17029.</title>
        <authorList>
            <person name="Copeland A."/>
            <person name="Lucas S."/>
            <person name="Lapidus A."/>
            <person name="Barry K."/>
            <person name="Detter J.C."/>
            <person name="Glavina del Rio T."/>
            <person name="Hammon N."/>
            <person name="Israni S."/>
            <person name="Dalin E."/>
            <person name="Tice H."/>
            <person name="Pitluck S."/>
            <person name="Kiss H."/>
            <person name="Brettin T."/>
            <person name="Bruce D."/>
            <person name="Han C."/>
            <person name="Tapia R."/>
            <person name="Gilna P."/>
            <person name="Schmutz J."/>
            <person name="Larimer F."/>
            <person name="Land M."/>
            <person name="Hauser L."/>
            <person name="Kyrpides N."/>
            <person name="Mikhailova N."/>
            <person name="Richardson P."/>
            <person name="Mackenzie C."/>
            <person name="Choudhary M."/>
            <person name="Donohue T.J."/>
            <person name="Kaplan S."/>
        </authorList>
    </citation>
    <scope>NUCLEOTIDE SEQUENCE [LARGE SCALE GENOMIC DNA]</scope>
    <source>
        <strain>ATCC 17029 / ATH 2.4.9</strain>
    </source>
</reference>
<dbReference type="EMBL" id="CP000577">
    <property type="protein sequence ID" value="ABN75499.1"/>
    <property type="molecule type" value="Genomic_DNA"/>
</dbReference>
<dbReference type="RefSeq" id="WP_002722532.1">
    <property type="nucleotide sequence ID" value="NC_009049.1"/>
</dbReference>
<dbReference type="SMR" id="A3PGN3"/>
<dbReference type="GeneID" id="67445522"/>
<dbReference type="KEGG" id="rsh:Rsph17029_0383"/>
<dbReference type="HOGENOM" id="CLU_103849_1_2_5"/>
<dbReference type="GO" id="GO:0005829">
    <property type="term" value="C:cytosol"/>
    <property type="evidence" value="ECO:0007669"/>
    <property type="project" value="TreeGrafter"/>
</dbReference>
<dbReference type="GO" id="GO:0015935">
    <property type="term" value="C:small ribosomal subunit"/>
    <property type="evidence" value="ECO:0007669"/>
    <property type="project" value="TreeGrafter"/>
</dbReference>
<dbReference type="GO" id="GO:0019843">
    <property type="term" value="F:rRNA binding"/>
    <property type="evidence" value="ECO:0007669"/>
    <property type="project" value="UniProtKB-UniRule"/>
</dbReference>
<dbReference type="GO" id="GO:0003735">
    <property type="term" value="F:structural constituent of ribosome"/>
    <property type="evidence" value="ECO:0007669"/>
    <property type="project" value="InterPro"/>
</dbReference>
<dbReference type="GO" id="GO:0000049">
    <property type="term" value="F:tRNA binding"/>
    <property type="evidence" value="ECO:0007669"/>
    <property type="project" value="UniProtKB-UniRule"/>
</dbReference>
<dbReference type="GO" id="GO:0006412">
    <property type="term" value="P:translation"/>
    <property type="evidence" value="ECO:0007669"/>
    <property type="project" value="UniProtKB-UniRule"/>
</dbReference>
<dbReference type="FunFam" id="1.10.8.50:FF:000001">
    <property type="entry name" value="30S ribosomal protein S13"/>
    <property type="match status" value="1"/>
</dbReference>
<dbReference type="FunFam" id="4.10.910.10:FF:000001">
    <property type="entry name" value="30S ribosomal protein S13"/>
    <property type="match status" value="1"/>
</dbReference>
<dbReference type="Gene3D" id="1.10.8.50">
    <property type="match status" value="1"/>
</dbReference>
<dbReference type="Gene3D" id="4.10.910.10">
    <property type="entry name" value="30s ribosomal protein s13, domain 2"/>
    <property type="match status" value="1"/>
</dbReference>
<dbReference type="HAMAP" id="MF_01315">
    <property type="entry name" value="Ribosomal_uS13"/>
    <property type="match status" value="1"/>
</dbReference>
<dbReference type="InterPro" id="IPR027437">
    <property type="entry name" value="Rbsml_uS13_C"/>
</dbReference>
<dbReference type="InterPro" id="IPR001892">
    <property type="entry name" value="Ribosomal_uS13"/>
</dbReference>
<dbReference type="InterPro" id="IPR010979">
    <property type="entry name" value="Ribosomal_uS13-like_H2TH"/>
</dbReference>
<dbReference type="InterPro" id="IPR019980">
    <property type="entry name" value="Ribosomal_uS13_bac-type"/>
</dbReference>
<dbReference type="InterPro" id="IPR018269">
    <property type="entry name" value="Ribosomal_uS13_CS"/>
</dbReference>
<dbReference type="NCBIfam" id="TIGR03631">
    <property type="entry name" value="uS13_bact"/>
    <property type="match status" value="1"/>
</dbReference>
<dbReference type="PANTHER" id="PTHR10871">
    <property type="entry name" value="30S RIBOSOMAL PROTEIN S13/40S RIBOSOMAL PROTEIN S18"/>
    <property type="match status" value="1"/>
</dbReference>
<dbReference type="PANTHER" id="PTHR10871:SF1">
    <property type="entry name" value="SMALL RIBOSOMAL SUBUNIT PROTEIN US13M"/>
    <property type="match status" value="1"/>
</dbReference>
<dbReference type="Pfam" id="PF00416">
    <property type="entry name" value="Ribosomal_S13"/>
    <property type="match status" value="1"/>
</dbReference>
<dbReference type="PIRSF" id="PIRSF002134">
    <property type="entry name" value="Ribosomal_S13"/>
    <property type="match status" value="1"/>
</dbReference>
<dbReference type="SUPFAM" id="SSF46946">
    <property type="entry name" value="S13-like H2TH domain"/>
    <property type="match status" value="1"/>
</dbReference>
<dbReference type="PROSITE" id="PS00646">
    <property type="entry name" value="RIBOSOMAL_S13_1"/>
    <property type="match status" value="1"/>
</dbReference>
<dbReference type="PROSITE" id="PS50159">
    <property type="entry name" value="RIBOSOMAL_S13_2"/>
    <property type="match status" value="1"/>
</dbReference>
<feature type="chain" id="PRO_0000306689" description="Small ribosomal subunit protein uS13">
    <location>
        <begin position="1"/>
        <end position="122"/>
    </location>
</feature>
<feature type="region of interest" description="Disordered" evidence="2">
    <location>
        <begin position="99"/>
        <end position="122"/>
    </location>
</feature>
<evidence type="ECO:0000255" key="1">
    <source>
        <dbReference type="HAMAP-Rule" id="MF_01315"/>
    </source>
</evidence>
<evidence type="ECO:0000256" key="2">
    <source>
        <dbReference type="SAM" id="MobiDB-lite"/>
    </source>
</evidence>
<evidence type="ECO:0000305" key="3"/>
<keyword id="KW-0687">Ribonucleoprotein</keyword>
<keyword id="KW-0689">Ribosomal protein</keyword>
<keyword id="KW-0694">RNA-binding</keyword>
<keyword id="KW-0699">rRNA-binding</keyword>
<keyword id="KW-0820">tRNA-binding</keyword>
<organism>
    <name type="scientific">Cereibacter sphaeroides (strain ATCC 17029 / ATH 2.4.9)</name>
    <name type="common">Rhodobacter sphaeroides</name>
    <dbReference type="NCBI Taxonomy" id="349101"/>
    <lineage>
        <taxon>Bacteria</taxon>
        <taxon>Pseudomonadati</taxon>
        <taxon>Pseudomonadota</taxon>
        <taxon>Alphaproteobacteria</taxon>
        <taxon>Rhodobacterales</taxon>
        <taxon>Paracoccaceae</taxon>
        <taxon>Cereibacter</taxon>
    </lineage>
</organism>
<gene>
    <name evidence="1" type="primary">rpsM</name>
    <name type="ordered locus">Rsph17029_0383</name>
</gene>
<name>RS13_CERS1</name>
<protein>
    <recommendedName>
        <fullName evidence="1">Small ribosomal subunit protein uS13</fullName>
    </recommendedName>
    <alternativeName>
        <fullName evidence="3">30S ribosomal protein S13</fullName>
    </alternativeName>
</protein>
<accession>A3PGN3</accession>